<keyword id="KW-0030">Aminoacyl-tRNA synthetase</keyword>
<keyword id="KW-0067">ATP-binding</keyword>
<keyword id="KW-0963">Cytoplasm</keyword>
<keyword id="KW-0436">Ligase</keyword>
<keyword id="KW-0479">Metal-binding</keyword>
<keyword id="KW-0547">Nucleotide-binding</keyword>
<keyword id="KW-0648">Protein biosynthesis</keyword>
<keyword id="KW-1185">Reference proteome</keyword>
<keyword id="KW-0862">Zinc</keyword>
<comment type="function">
    <text evidence="1">Catalyzes the attachment of isoleucine to tRNA(Ile). As IleRS can inadvertently accommodate and process structurally similar amino acids such as valine, to avoid such errors it has two additional distinct tRNA(Ile)-dependent editing activities. One activity is designated as 'pretransfer' editing and involves the hydrolysis of activated Val-AMP. The other activity is designated 'posttransfer' editing and involves deacylation of mischarged Val-tRNA(Ile).</text>
</comment>
<comment type="catalytic activity">
    <reaction evidence="1">
        <text>tRNA(Ile) + L-isoleucine + ATP = L-isoleucyl-tRNA(Ile) + AMP + diphosphate</text>
        <dbReference type="Rhea" id="RHEA:11060"/>
        <dbReference type="Rhea" id="RHEA-COMP:9666"/>
        <dbReference type="Rhea" id="RHEA-COMP:9695"/>
        <dbReference type="ChEBI" id="CHEBI:30616"/>
        <dbReference type="ChEBI" id="CHEBI:33019"/>
        <dbReference type="ChEBI" id="CHEBI:58045"/>
        <dbReference type="ChEBI" id="CHEBI:78442"/>
        <dbReference type="ChEBI" id="CHEBI:78528"/>
        <dbReference type="ChEBI" id="CHEBI:456215"/>
        <dbReference type="EC" id="6.1.1.5"/>
    </reaction>
</comment>
<comment type="cofactor">
    <cofactor evidence="1">
        <name>Zn(2+)</name>
        <dbReference type="ChEBI" id="CHEBI:29105"/>
    </cofactor>
    <text evidence="1">Binds 1 zinc ion per subunit.</text>
</comment>
<comment type="subunit">
    <text evidence="1">Monomer.</text>
</comment>
<comment type="subcellular location">
    <subcellularLocation>
        <location evidence="1">Cytoplasm</location>
    </subcellularLocation>
</comment>
<comment type="domain">
    <text evidence="1">IleRS has two distinct active sites: one for aminoacylation and one for editing. The misactivated valine is translocated from the active site to the editing site, which sterically excludes the correctly activated isoleucine. The single editing site contains two valyl binding pockets, one specific for each substrate (Val-AMP or Val-tRNA(Ile)).</text>
</comment>
<comment type="similarity">
    <text evidence="1">Belongs to the class-I aminoacyl-tRNA synthetase family. IleS type 1 subfamily.</text>
</comment>
<reference key="1">
    <citation type="journal article" date="2000" name="Nature">
        <title>Genome sequence of the endocellular bacterial symbiont of aphids Buchnera sp. APS.</title>
        <authorList>
            <person name="Shigenobu S."/>
            <person name="Watanabe H."/>
            <person name="Hattori M."/>
            <person name="Sakaki Y."/>
            <person name="Ishikawa H."/>
        </authorList>
    </citation>
    <scope>NUCLEOTIDE SEQUENCE [LARGE SCALE GENOMIC DNA]</scope>
    <source>
        <strain>APS</strain>
    </source>
</reference>
<gene>
    <name evidence="1" type="primary">ileS</name>
    <name type="ordered locus">BU149</name>
</gene>
<dbReference type="EC" id="6.1.1.5" evidence="1"/>
<dbReference type="EMBL" id="BA000003">
    <property type="protein sequence ID" value="BAB12867.1"/>
    <property type="molecule type" value="Genomic_DNA"/>
</dbReference>
<dbReference type="RefSeq" id="NP_239981.1">
    <property type="nucleotide sequence ID" value="NC_002528.1"/>
</dbReference>
<dbReference type="RefSeq" id="WP_010895974.1">
    <property type="nucleotide sequence ID" value="NC_002528.1"/>
</dbReference>
<dbReference type="SMR" id="P57249"/>
<dbReference type="STRING" id="563178.BUAP5A_147"/>
<dbReference type="EnsemblBacteria" id="BAB12867">
    <property type="protein sequence ID" value="BAB12867"/>
    <property type="gene ID" value="BAB12867"/>
</dbReference>
<dbReference type="KEGG" id="buc:BU149"/>
<dbReference type="PATRIC" id="fig|107806.10.peg.158"/>
<dbReference type="eggNOG" id="COG0060">
    <property type="taxonomic scope" value="Bacteria"/>
</dbReference>
<dbReference type="HOGENOM" id="CLU_001493_7_0_6"/>
<dbReference type="Proteomes" id="UP000001806">
    <property type="component" value="Chromosome"/>
</dbReference>
<dbReference type="GO" id="GO:0005829">
    <property type="term" value="C:cytosol"/>
    <property type="evidence" value="ECO:0007669"/>
    <property type="project" value="TreeGrafter"/>
</dbReference>
<dbReference type="GO" id="GO:0002161">
    <property type="term" value="F:aminoacyl-tRNA deacylase activity"/>
    <property type="evidence" value="ECO:0007669"/>
    <property type="project" value="InterPro"/>
</dbReference>
<dbReference type="GO" id="GO:0005524">
    <property type="term" value="F:ATP binding"/>
    <property type="evidence" value="ECO:0007669"/>
    <property type="project" value="UniProtKB-UniRule"/>
</dbReference>
<dbReference type="GO" id="GO:0004822">
    <property type="term" value="F:isoleucine-tRNA ligase activity"/>
    <property type="evidence" value="ECO:0007669"/>
    <property type="project" value="UniProtKB-UniRule"/>
</dbReference>
<dbReference type="GO" id="GO:0000049">
    <property type="term" value="F:tRNA binding"/>
    <property type="evidence" value="ECO:0007669"/>
    <property type="project" value="InterPro"/>
</dbReference>
<dbReference type="GO" id="GO:0008270">
    <property type="term" value="F:zinc ion binding"/>
    <property type="evidence" value="ECO:0007669"/>
    <property type="project" value="UniProtKB-UniRule"/>
</dbReference>
<dbReference type="GO" id="GO:0006428">
    <property type="term" value="P:isoleucyl-tRNA aminoacylation"/>
    <property type="evidence" value="ECO:0007669"/>
    <property type="project" value="UniProtKB-UniRule"/>
</dbReference>
<dbReference type="CDD" id="cd07960">
    <property type="entry name" value="Anticodon_Ia_Ile_BEm"/>
    <property type="match status" value="1"/>
</dbReference>
<dbReference type="CDD" id="cd00818">
    <property type="entry name" value="IleRS_core"/>
    <property type="match status" value="1"/>
</dbReference>
<dbReference type="FunFam" id="1.10.730.20:FF:000001">
    <property type="entry name" value="Isoleucine--tRNA ligase"/>
    <property type="match status" value="1"/>
</dbReference>
<dbReference type="FunFam" id="3.40.50.620:FF:000042">
    <property type="entry name" value="Isoleucine--tRNA ligase"/>
    <property type="match status" value="1"/>
</dbReference>
<dbReference type="FunFam" id="3.40.50.620:FF:000048">
    <property type="entry name" value="Isoleucine--tRNA ligase"/>
    <property type="match status" value="1"/>
</dbReference>
<dbReference type="Gene3D" id="1.10.730.20">
    <property type="match status" value="1"/>
</dbReference>
<dbReference type="Gene3D" id="3.40.50.620">
    <property type="entry name" value="HUPs"/>
    <property type="match status" value="2"/>
</dbReference>
<dbReference type="HAMAP" id="MF_02002">
    <property type="entry name" value="Ile_tRNA_synth_type1"/>
    <property type="match status" value="1"/>
</dbReference>
<dbReference type="InterPro" id="IPR001412">
    <property type="entry name" value="aa-tRNA-synth_I_CS"/>
</dbReference>
<dbReference type="InterPro" id="IPR002300">
    <property type="entry name" value="aa-tRNA-synth_Ia"/>
</dbReference>
<dbReference type="InterPro" id="IPR033708">
    <property type="entry name" value="Anticodon_Ile_BEm"/>
</dbReference>
<dbReference type="InterPro" id="IPR002301">
    <property type="entry name" value="Ile-tRNA-ligase"/>
</dbReference>
<dbReference type="InterPro" id="IPR023585">
    <property type="entry name" value="Ile-tRNA-ligase_type1"/>
</dbReference>
<dbReference type="InterPro" id="IPR050081">
    <property type="entry name" value="Ile-tRNA_ligase"/>
</dbReference>
<dbReference type="InterPro" id="IPR013155">
    <property type="entry name" value="M/V/L/I-tRNA-synth_anticd-bd"/>
</dbReference>
<dbReference type="InterPro" id="IPR014729">
    <property type="entry name" value="Rossmann-like_a/b/a_fold"/>
</dbReference>
<dbReference type="InterPro" id="IPR009080">
    <property type="entry name" value="tRNAsynth_Ia_anticodon-bd"/>
</dbReference>
<dbReference type="InterPro" id="IPR009008">
    <property type="entry name" value="Val/Leu/Ile-tRNA-synth_edit"/>
</dbReference>
<dbReference type="InterPro" id="IPR010663">
    <property type="entry name" value="Znf_FPG/IleRS"/>
</dbReference>
<dbReference type="NCBIfam" id="TIGR00392">
    <property type="entry name" value="ileS"/>
    <property type="match status" value="1"/>
</dbReference>
<dbReference type="PANTHER" id="PTHR42765:SF1">
    <property type="entry name" value="ISOLEUCINE--TRNA LIGASE, MITOCHONDRIAL"/>
    <property type="match status" value="1"/>
</dbReference>
<dbReference type="PANTHER" id="PTHR42765">
    <property type="entry name" value="SOLEUCYL-TRNA SYNTHETASE"/>
    <property type="match status" value="1"/>
</dbReference>
<dbReference type="Pfam" id="PF08264">
    <property type="entry name" value="Anticodon_1"/>
    <property type="match status" value="1"/>
</dbReference>
<dbReference type="Pfam" id="PF00133">
    <property type="entry name" value="tRNA-synt_1"/>
    <property type="match status" value="1"/>
</dbReference>
<dbReference type="Pfam" id="PF06827">
    <property type="entry name" value="zf-FPG_IleRS"/>
    <property type="match status" value="1"/>
</dbReference>
<dbReference type="PRINTS" id="PR00984">
    <property type="entry name" value="TRNASYNTHILE"/>
</dbReference>
<dbReference type="SUPFAM" id="SSF47323">
    <property type="entry name" value="Anticodon-binding domain of a subclass of class I aminoacyl-tRNA synthetases"/>
    <property type="match status" value="1"/>
</dbReference>
<dbReference type="SUPFAM" id="SSF52374">
    <property type="entry name" value="Nucleotidylyl transferase"/>
    <property type="match status" value="1"/>
</dbReference>
<dbReference type="SUPFAM" id="SSF50677">
    <property type="entry name" value="ValRS/IleRS/LeuRS editing domain"/>
    <property type="match status" value="1"/>
</dbReference>
<dbReference type="PROSITE" id="PS00178">
    <property type="entry name" value="AA_TRNA_LIGASE_I"/>
    <property type="match status" value="1"/>
</dbReference>
<feature type="chain" id="PRO_0000098365" description="Isoleucine--tRNA ligase">
    <location>
        <begin position="1"/>
        <end position="940"/>
    </location>
</feature>
<feature type="short sequence motif" description="'HIGH' region">
    <location>
        <begin position="58"/>
        <end position="68"/>
    </location>
</feature>
<feature type="short sequence motif" description="'KMSKS' region">
    <location>
        <begin position="604"/>
        <end position="608"/>
    </location>
</feature>
<feature type="binding site" evidence="1">
    <location>
        <position position="563"/>
    </location>
    <ligand>
        <name>L-isoleucyl-5'-AMP</name>
        <dbReference type="ChEBI" id="CHEBI:178002"/>
    </ligand>
</feature>
<feature type="binding site" evidence="1">
    <location>
        <position position="607"/>
    </location>
    <ligand>
        <name>ATP</name>
        <dbReference type="ChEBI" id="CHEBI:30616"/>
    </ligand>
</feature>
<feature type="binding site" evidence="1">
    <location>
        <position position="903"/>
    </location>
    <ligand>
        <name>Zn(2+)</name>
        <dbReference type="ChEBI" id="CHEBI:29105"/>
    </ligand>
</feature>
<feature type="binding site" evidence="1">
    <location>
        <position position="906"/>
    </location>
    <ligand>
        <name>Zn(2+)</name>
        <dbReference type="ChEBI" id="CHEBI:29105"/>
    </ligand>
</feature>
<feature type="binding site" evidence="1">
    <location>
        <position position="923"/>
    </location>
    <ligand>
        <name>Zn(2+)</name>
        <dbReference type="ChEBI" id="CHEBI:29105"/>
    </ligand>
</feature>
<feature type="binding site" evidence="1">
    <location>
        <position position="926"/>
    </location>
    <ligand>
        <name>Zn(2+)</name>
        <dbReference type="ChEBI" id="CHEBI:29105"/>
    </ligand>
</feature>
<protein>
    <recommendedName>
        <fullName evidence="1">Isoleucine--tRNA ligase</fullName>
        <ecNumber evidence="1">6.1.1.5</ecNumber>
    </recommendedName>
    <alternativeName>
        <fullName evidence="1">Isoleucyl-tRNA synthetase</fullName>
        <shortName evidence="1">IleRS</shortName>
    </alternativeName>
</protein>
<sequence>MDDYKDTLNLPKTLFSMRGNLSKKEPNILKSWNENNLYKLIRKKNQEKKIFFLHDGPPYANGNIHIGHAVNKILKDIIIKSKNMSGFDAPYIPSWDCHGLPIEQKVEEKIKSNQGEISTTEFQEKCRKYAQDQVEKQKKDFIRLGVIGDWDNPHLTMNFKNEANIIKTLSKIVQKKHLYQDFKPIHWCLKCASSLSEAEIEYSKKKSDSIIVGFKFKYKSIIEKLFDFQISNKKEIHLLIWTTTPWTLPSSKAISIHPDFQYQLIETERCYLIIAKELVEKTLNTLKIKKSIIRNYVKGRFLEKMICLHPFLKNIDLPVILGKHVTLESGTGAVHTAPDHGLEDYIISQKYNIKTSNIVNFKGEYISNTHDKLDGVNVLEANSIIIELLIKNNTFFHHESLIHSYPHCWRHKSPVIYRATPQWFIDIDQKQLRIKLLQEIKKVRWIPEWGESRIGEMIKKRPDWCISRQRKWGVPMSIFIHKNTRKIHPNTFVFMKKIAKKVELEGLQVWWNIDSKEILGEEYQSYEKILDILDVWFESGNTHTTINYKNKNYTKKNADMFLEGSDQHRGWFMSSLIISTLISEKKPYSEVLTHGFVVDGKGQKMSKSIGNTISPNEIVDTLGADILRLWVASSNYSNDISISNEILKSSSDIYRRIRNTARFMLANISDFDPKKNIISKENMVLLDKWAIGQTKIVQEEIIQHYNNYNFHAVIQRLMYFCSIEMGSFYLDIIKDRQYTLKKHSQERRSSQTAIYYIINSLVRWIAPILSFTADEIWSYLPENNSQYVFMEEWFDKLFYLDQDDLFNYQFWNEIITIKHEINKFLEEAIQNKTINNSLETSIILYVSHELSNKLKILEQETKFIFLTSDIQIKLYDTAPKNAKKSKIVPYLKVSLEKIKGKKCPRCWHYFNFTKKNIKNSDICNRCILNTIGNGEKRIFI</sequence>
<proteinExistence type="inferred from homology"/>
<organism>
    <name type="scientific">Buchnera aphidicola subsp. Acyrthosiphon pisum (strain APS)</name>
    <name type="common">Acyrthosiphon pisum symbiotic bacterium</name>
    <dbReference type="NCBI Taxonomy" id="107806"/>
    <lineage>
        <taxon>Bacteria</taxon>
        <taxon>Pseudomonadati</taxon>
        <taxon>Pseudomonadota</taxon>
        <taxon>Gammaproteobacteria</taxon>
        <taxon>Enterobacterales</taxon>
        <taxon>Erwiniaceae</taxon>
        <taxon>Buchnera</taxon>
    </lineage>
</organism>
<name>SYI_BUCAI</name>
<accession>P57249</accession>
<evidence type="ECO:0000255" key="1">
    <source>
        <dbReference type="HAMAP-Rule" id="MF_02002"/>
    </source>
</evidence>